<keyword id="KW-0169">Cobalamin biosynthesis</keyword>
<keyword id="KW-0489">Methyltransferase</keyword>
<keyword id="KW-1185">Reference proteome</keyword>
<keyword id="KW-0949">S-adenosyl-L-methionine</keyword>
<keyword id="KW-0808">Transferase</keyword>
<protein>
    <recommendedName>
        <fullName evidence="1">Cobalt-precorrin-5B C(1)-methyltransferase</fullName>
        <ecNumber evidence="1">2.1.1.195</ecNumber>
    </recommendedName>
    <alternativeName>
        <fullName evidence="1">Cobalt-precorrin-6A synthase</fullName>
    </alternativeName>
</protein>
<name>CBID_BURM1</name>
<organism>
    <name type="scientific">Burkholderia multivorans (strain ATCC 17616 / 249)</name>
    <dbReference type="NCBI Taxonomy" id="395019"/>
    <lineage>
        <taxon>Bacteria</taxon>
        <taxon>Pseudomonadati</taxon>
        <taxon>Pseudomonadota</taxon>
        <taxon>Betaproteobacteria</taxon>
        <taxon>Burkholderiales</taxon>
        <taxon>Burkholderiaceae</taxon>
        <taxon>Burkholderia</taxon>
        <taxon>Burkholderia cepacia complex</taxon>
    </lineage>
</organism>
<accession>A9AHY0</accession>
<evidence type="ECO:0000255" key="1">
    <source>
        <dbReference type="HAMAP-Rule" id="MF_00787"/>
    </source>
</evidence>
<comment type="function">
    <text evidence="1">Catalyzes the methylation of C-1 in cobalt-precorrin-5B to form cobalt-precorrin-6A.</text>
</comment>
<comment type="catalytic activity">
    <reaction evidence="1">
        <text>Co-precorrin-5B + S-adenosyl-L-methionine = Co-precorrin-6A + S-adenosyl-L-homocysteine</text>
        <dbReference type="Rhea" id="RHEA:26285"/>
        <dbReference type="ChEBI" id="CHEBI:57856"/>
        <dbReference type="ChEBI" id="CHEBI:59789"/>
        <dbReference type="ChEBI" id="CHEBI:60063"/>
        <dbReference type="ChEBI" id="CHEBI:60064"/>
        <dbReference type="EC" id="2.1.1.195"/>
    </reaction>
</comment>
<comment type="pathway">
    <text evidence="1">Cofactor biosynthesis; adenosylcobalamin biosynthesis; cob(II)yrinate a,c-diamide from sirohydrochlorin (anaerobic route): step 6/10.</text>
</comment>
<comment type="similarity">
    <text evidence="1">Belongs to the CbiD family.</text>
</comment>
<gene>
    <name evidence="1" type="primary">cbiD</name>
    <name type="ordered locus">Bmul_1566</name>
    <name type="ordered locus">BMULJ_01678</name>
</gene>
<reference key="1">
    <citation type="submission" date="2007-10" db="EMBL/GenBank/DDBJ databases">
        <title>Complete sequence of chromosome 1 of Burkholderia multivorans ATCC 17616.</title>
        <authorList>
            <person name="Copeland A."/>
            <person name="Lucas S."/>
            <person name="Lapidus A."/>
            <person name="Barry K."/>
            <person name="Glavina del Rio T."/>
            <person name="Dalin E."/>
            <person name="Tice H."/>
            <person name="Pitluck S."/>
            <person name="Chain P."/>
            <person name="Malfatti S."/>
            <person name="Shin M."/>
            <person name="Vergez L."/>
            <person name="Schmutz J."/>
            <person name="Larimer F."/>
            <person name="Land M."/>
            <person name="Hauser L."/>
            <person name="Kyrpides N."/>
            <person name="Kim E."/>
            <person name="Tiedje J."/>
            <person name="Richardson P."/>
        </authorList>
    </citation>
    <scope>NUCLEOTIDE SEQUENCE [LARGE SCALE GENOMIC DNA]</scope>
    <source>
        <strain>ATCC 17616 / 249</strain>
    </source>
</reference>
<reference key="2">
    <citation type="submission" date="2007-04" db="EMBL/GenBank/DDBJ databases">
        <title>Complete genome sequence of Burkholderia multivorans ATCC 17616.</title>
        <authorList>
            <person name="Ohtsubo Y."/>
            <person name="Yamashita A."/>
            <person name="Kurokawa K."/>
            <person name="Takami H."/>
            <person name="Yuhara S."/>
            <person name="Nishiyama E."/>
            <person name="Endo R."/>
            <person name="Miyazaki R."/>
            <person name="Ono A."/>
            <person name="Yano K."/>
            <person name="Ito M."/>
            <person name="Sota M."/>
            <person name="Yuji N."/>
            <person name="Hattori M."/>
            <person name="Tsuda M."/>
        </authorList>
    </citation>
    <scope>NUCLEOTIDE SEQUENCE [LARGE SCALE GENOMIC DNA]</scope>
    <source>
        <strain>ATCC 17616 / 249</strain>
    </source>
</reference>
<proteinExistence type="inferred from homology"/>
<sequence>MRDETPERPAPLRFGYTTGSCATATSLAAARLLLTGRADDAVEIVLPKGQRVMMRLEFCRATADGAEAGTIKDAGDDPDVTHGALIFARVALGGARGVRFHAGPGVGTVTRAGLALPIGEPAINPVPRQMMTTHLDALAAEQGYTGGFDVTIGVEGGEALALKTMNPRLGIVGGLSILGTTGIVRPFSCSAYIASIHQGIDVARANGVAHIAACTGNASEDAMRAHYGLPDIALIEMGDFAGAVLKHLRRAPVARLSMCGGFGKLSKLAAGHLDLHSRHSSIDLPLLAQWARDAGASDALQAAIRAANTSVEALALAGADGVPLGDVVCAHALRVARDIVPASVAVEMFAIDRQGRFVGSAR</sequence>
<feature type="chain" id="PRO_1000133730" description="Cobalt-precorrin-5B C(1)-methyltransferase">
    <location>
        <begin position="1"/>
        <end position="362"/>
    </location>
</feature>
<dbReference type="EC" id="2.1.1.195" evidence="1"/>
<dbReference type="EMBL" id="CP000868">
    <property type="protein sequence ID" value="ABX15254.1"/>
    <property type="molecule type" value="Genomic_DNA"/>
</dbReference>
<dbReference type="EMBL" id="AP009385">
    <property type="protein sequence ID" value="BAG43599.1"/>
    <property type="molecule type" value="Genomic_DNA"/>
</dbReference>
<dbReference type="RefSeq" id="WP_012213335.1">
    <property type="nucleotide sequence ID" value="NC_010084.1"/>
</dbReference>
<dbReference type="SMR" id="A9AHY0"/>
<dbReference type="STRING" id="395019.BMULJ_01678"/>
<dbReference type="KEGG" id="bmj:BMULJ_01678"/>
<dbReference type="KEGG" id="bmu:Bmul_1566"/>
<dbReference type="eggNOG" id="COG1903">
    <property type="taxonomic scope" value="Bacteria"/>
</dbReference>
<dbReference type="HOGENOM" id="CLU_041273_0_0_4"/>
<dbReference type="UniPathway" id="UPA00148">
    <property type="reaction ID" value="UER00227"/>
</dbReference>
<dbReference type="Proteomes" id="UP000008815">
    <property type="component" value="Chromosome 1"/>
</dbReference>
<dbReference type="GO" id="GO:0043780">
    <property type="term" value="F:cobalt-precorrin-5B C1-methyltransferase activity"/>
    <property type="evidence" value="ECO:0007669"/>
    <property type="project" value="RHEA"/>
</dbReference>
<dbReference type="GO" id="GO:0019251">
    <property type="term" value="P:anaerobic cobalamin biosynthetic process"/>
    <property type="evidence" value="ECO:0007669"/>
    <property type="project" value="UniProtKB-UniRule"/>
</dbReference>
<dbReference type="GO" id="GO:0032259">
    <property type="term" value="P:methylation"/>
    <property type="evidence" value="ECO:0007669"/>
    <property type="project" value="UniProtKB-KW"/>
</dbReference>
<dbReference type="Gene3D" id="3.30.2110.10">
    <property type="entry name" value="CbiD-like"/>
    <property type="match status" value="1"/>
</dbReference>
<dbReference type="HAMAP" id="MF_00787">
    <property type="entry name" value="CbiD"/>
    <property type="match status" value="1"/>
</dbReference>
<dbReference type="InterPro" id="IPR002748">
    <property type="entry name" value="CbiD"/>
</dbReference>
<dbReference type="InterPro" id="IPR036074">
    <property type="entry name" value="CbiD_sf"/>
</dbReference>
<dbReference type="NCBIfam" id="TIGR00312">
    <property type="entry name" value="cbiD"/>
    <property type="match status" value="1"/>
</dbReference>
<dbReference type="NCBIfam" id="NF000849">
    <property type="entry name" value="PRK00075.1-1"/>
    <property type="match status" value="1"/>
</dbReference>
<dbReference type="PANTHER" id="PTHR35863">
    <property type="entry name" value="COBALT-PRECORRIN-5B C(1)-METHYLTRANSFERASE"/>
    <property type="match status" value="1"/>
</dbReference>
<dbReference type="PANTHER" id="PTHR35863:SF1">
    <property type="entry name" value="COBALT-PRECORRIN-5B C(1)-METHYLTRANSFERASE"/>
    <property type="match status" value="1"/>
</dbReference>
<dbReference type="Pfam" id="PF01888">
    <property type="entry name" value="CbiD"/>
    <property type="match status" value="1"/>
</dbReference>
<dbReference type="PIRSF" id="PIRSF026782">
    <property type="entry name" value="CbiD"/>
    <property type="match status" value="1"/>
</dbReference>
<dbReference type="SUPFAM" id="SSF111342">
    <property type="entry name" value="CbiD-like"/>
    <property type="match status" value="1"/>
</dbReference>